<reference key="1">
    <citation type="journal article" date="2008" name="J. Bacteriol.">
        <title>The pangenome structure of Escherichia coli: comparative genomic analysis of E. coli commensal and pathogenic isolates.</title>
        <authorList>
            <person name="Rasko D.A."/>
            <person name="Rosovitz M.J."/>
            <person name="Myers G.S.A."/>
            <person name="Mongodin E.F."/>
            <person name="Fricke W.F."/>
            <person name="Gajer P."/>
            <person name="Crabtree J."/>
            <person name="Sebaihia M."/>
            <person name="Thomson N.R."/>
            <person name="Chaudhuri R."/>
            <person name="Henderson I.R."/>
            <person name="Sperandio V."/>
            <person name="Ravel J."/>
        </authorList>
    </citation>
    <scope>NUCLEOTIDE SEQUENCE [LARGE SCALE GENOMIC DNA]</scope>
    <source>
        <strain>E24377A / ETEC</strain>
    </source>
</reference>
<comment type="catalytic activity">
    <reaction evidence="1">
        <text>sn-glycerol 3-phosphate + an acyl-CoA = a 1-acyl-sn-glycero-3-phosphate + CoA</text>
        <dbReference type="Rhea" id="RHEA:15325"/>
        <dbReference type="ChEBI" id="CHEBI:57287"/>
        <dbReference type="ChEBI" id="CHEBI:57597"/>
        <dbReference type="ChEBI" id="CHEBI:57970"/>
        <dbReference type="ChEBI" id="CHEBI:58342"/>
        <dbReference type="EC" id="2.3.1.15"/>
    </reaction>
</comment>
<comment type="pathway">
    <text evidence="1">Phospholipid metabolism; CDP-diacylglycerol biosynthesis; CDP-diacylglycerol from sn-glycerol 3-phosphate: step 1/3.</text>
</comment>
<comment type="subcellular location">
    <subcellularLocation>
        <location evidence="1">Cell inner membrane</location>
        <topology evidence="1">Peripheral membrane protein</topology>
        <orientation evidence="1">Cytoplasmic side</orientation>
    </subcellularLocation>
</comment>
<comment type="domain">
    <text evidence="1">The HXXXXD motif is essential for acyltransferase activity and may constitute the binding site for the phosphate moiety of the glycerol-3-phosphate.</text>
</comment>
<comment type="similarity">
    <text evidence="1">Belongs to the GPAT/DAPAT family.</text>
</comment>
<feature type="chain" id="PRO_1000060775" description="Glycerol-3-phosphate acyltransferase">
    <location>
        <begin position="1"/>
        <end position="807"/>
    </location>
</feature>
<feature type="short sequence motif" description="HXXXXD motif">
    <location>
        <begin position="305"/>
        <end position="310"/>
    </location>
</feature>
<gene>
    <name evidence="1" type="primary">plsB</name>
    <name type="ordered locus">EcE24377A_4594</name>
</gene>
<name>PLSB_ECO24</name>
<sequence length="807" mass="91381">MSGWPRIYYKLLNLPLSILVKSKSIPADPAPELGLDTSRPIMYVLPYNSKADLLTLRAQCLAHDLPDPLEPLEIDGTLLPRYVFIHGGPRVFTYYTPKEESIKLFHDYLDLHRSNPNLDVQMVPVSVMFGRAPGREKGEVNPPLRMLNGVQKFFAVLWLGRDSFVRFSPSVSLRRMADEHGTDKTIAQKLARVARMHFARQRLAAVGPRLPARQDLFNKLLASRAIAKAVEDEARSKKISHEKAQQNAIALMEEIAANFSYEMIRLTDRILGFTWNRLYQGINVHNAERVRQLAHDGHELVYVPCHRSHMDYLLLSYVLYHQGLVPPHIAAGINLNFWPAGPIFRRLGAFFIRRTFKGNKLYSTVFREYLGELFSRGYSVEYFVEGGRSRTGRLLDPKTGTLSMTIQAMLRGGTRPITLIPIYIGYEHVMEVGTYAKELRGATKEKESLPQMLRGLSKLRNLGQGYVNFGEPMPLMTYLNQHVPDWRESIDPIEAVRPAWLTPTVNNIAADLMVRINNAGAANAMNLCCTALLASRQRSLTREQLTEQLNCYLDLMRNVPYSTDSTVPSASASELIDHALQMNKFEVEKDTIGDIIILPREQAVLMTYYRNNIAHMLVLPSLMAAIVTQHRHISRDVLMEHVNVLYPMLKAELFLRWDRDELPDVIDALANEMQRQGLITLQDDELHINPAHSRTLQLLAAGARETLQRYAITFWLLSANPSINRGTLEKESRTVAQRLSVLHGINAPEFFDKAVFSSLVLTLRDEGYISDSGDAEPAETMKVYQLLAELITSDVRLTIESATQGEG</sequence>
<protein>
    <recommendedName>
        <fullName evidence="1">Glycerol-3-phosphate acyltransferase</fullName>
        <shortName evidence="1">GPAT</shortName>
        <ecNumber evidence="1">2.3.1.15</ecNumber>
    </recommendedName>
</protein>
<keyword id="KW-0012">Acyltransferase</keyword>
<keyword id="KW-0997">Cell inner membrane</keyword>
<keyword id="KW-1003">Cell membrane</keyword>
<keyword id="KW-0444">Lipid biosynthesis</keyword>
<keyword id="KW-0443">Lipid metabolism</keyword>
<keyword id="KW-0472">Membrane</keyword>
<keyword id="KW-0594">Phospholipid biosynthesis</keyword>
<keyword id="KW-1208">Phospholipid metabolism</keyword>
<keyword id="KW-1185">Reference proteome</keyword>
<keyword id="KW-0808">Transferase</keyword>
<evidence type="ECO:0000255" key="1">
    <source>
        <dbReference type="HAMAP-Rule" id="MF_00393"/>
    </source>
</evidence>
<proteinExistence type="inferred from homology"/>
<organism>
    <name type="scientific">Escherichia coli O139:H28 (strain E24377A / ETEC)</name>
    <dbReference type="NCBI Taxonomy" id="331111"/>
    <lineage>
        <taxon>Bacteria</taxon>
        <taxon>Pseudomonadati</taxon>
        <taxon>Pseudomonadota</taxon>
        <taxon>Gammaproteobacteria</taxon>
        <taxon>Enterobacterales</taxon>
        <taxon>Enterobacteriaceae</taxon>
        <taxon>Escherichia</taxon>
    </lineage>
</organism>
<accession>A7ZUR3</accession>
<dbReference type="EC" id="2.3.1.15" evidence="1"/>
<dbReference type="EMBL" id="CP000800">
    <property type="protein sequence ID" value="ABV19306.1"/>
    <property type="molecule type" value="Genomic_DNA"/>
</dbReference>
<dbReference type="RefSeq" id="WP_000017354.1">
    <property type="nucleotide sequence ID" value="NC_009801.1"/>
</dbReference>
<dbReference type="SMR" id="A7ZUR3"/>
<dbReference type="GeneID" id="75204185"/>
<dbReference type="KEGG" id="ecw:EcE24377A_4594"/>
<dbReference type="HOGENOM" id="CLU_015407_0_0_6"/>
<dbReference type="UniPathway" id="UPA00557">
    <property type="reaction ID" value="UER00612"/>
</dbReference>
<dbReference type="Proteomes" id="UP000001122">
    <property type="component" value="Chromosome"/>
</dbReference>
<dbReference type="GO" id="GO:0005886">
    <property type="term" value="C:plasma membrane"/>
    <property type="evidence" value="ECO:0007669"/>
    <property type="project" value="UniProtKB-SubCell"/>
</dbReference>
<dbReference type="GO" id="GO:0004366">
    <property type="term" value="F:glycerol-3-phosphate O-acyltransferase activity"/>
    <property type="evidence" value="ECO:0007669"/>
    <property type="project" value="UniProtKB-UniRule"/>
</dbReference>
<dbReference type="GO" id="GO:0016024">
    <property type="term" value="P:CDP-diacylglycerol biosynthetic process"/>
    <property type="evidence" value="ECO:0007669"/>
    <property type="project" value="UniProtKB-UniRule"/>
</dbReference>
<dbReference type="GO" id="GO:0006631">
    <property type="term" value="P:fatty acid metabolic process"/>
    <property type="evidence" value="ECO:0007669"/>
    <property type="project" value="TreeGrafter"/>
</dbReference>
<dbReference type="CDD" id="cd07993">
    <property type="entry name" value="LPLAT_DHAPAT-like"/>
    <property type="match status" value="1"/>
</dbReference>
<dbReference type="HAMAP" id="MF_00393">
    <property type="entry name" value="Glyc3P_acyltrans"/>
    <property type="match status" value="1"/>
</dbReference>
<dbReference type="InterPro" id="IPR022284">
    <property type="entry name" value="GPAT/DHAPAT"/>
</dbReference>
<dbReference type="InterPro" id="IPR045520">
    <property type="entry name" value="GPAT/DHAPAT_C"/>
</dbReference>
<dbReference type="InterPro" id="IPR041728">
    <property type="entry name" value="GPAT/DHAPAT_LPLAT"/>
</dbReference>
<dbReference type="InterPro" id="IPR028354">
    <property type="entry name" value="GPAT_PlsB"/>
</dbReference>
<dbReference type="InterPro" id="IPR002123">
    <property type="entry name" value="Plipid/glycerol_acylTrfase"/>
</dbReference>
<dbReference type="NCBIfam" id="TIGR03703">
    <property type="entry name" value="plsB"/>
    <property type="match status" value="1"/>
</dbReference>
<dbReference type="NCBIfam" id="NF003441">
    <property type="entry name" value="PRK04974.1"/>
    <property type="match status" value="1"/>
</dbReference>
<dbReference type="PANTHER" id="PTHR12563:SF17">
    <property type="entry name" value="DIHYDROXYACETONE PHOSPHATE ACYLTRANSFERASE"/>
    <property type="match status" value="1"/>
</dbReference>
<dbReference type="PANTHER" id="PTHR12563">
    <property type="entry name" value="GLYCEROL-3-PHOSPHATE ACYLTRANSFERASE"/>
    <property type="match status" value="1"/>
</dbReference>
<dbReference type="Pfam" id="PF01553">
    <property type="entry name" value="Acyltransferase"/>
    <property type="match status" value="1"/>
</dbReference>
<dbReference type="Pfam" id="PF19277">
    <property type="entry name" value="GPAT_C"/>
    <property type="match status" value="1"/>
</dbReference>
<dbReference type="PIRSF" id="PIRSF500064">
    <property type="entry name" value="GPAT"/>
    <property type="match status" value="1"/>
</dbReference>
<dbReference type="PIRSF" id="PIRSF000437">
    <property type="entry name" value="GPAT_DHAPAT"/>
    <property type="match status" value="1"/>
</dbReference>
<dbReference type="SMART" id="SM00563">
    <property type="entry name" value="PlsC"/>
    <property type="match status" value="1"/>
</dbReference>
<dbReference type="SUPFAM" id="SSF69593">
    <property type="entry name" value="Glycerol-3-phosphate (1)-acyltransferase"/>
    <property type="match status" value="1"/>
</dbReference>